<organism>
    <name type="scientific">Caenorhabditis elegans</name>
    <dbReference type="NCBI Taxonomy" id="6239"/>
    <lineage>
        <taxon>Eukaryota</taxon>
        <taxon>Metazoa</taxon>
        <taxon>Ecdysozoa</taxon>
        <taxon>Nematoda</taxon>
        <taxon>Chromadorea</taxon>
        <taxon>Rhabditida</taxon>
        <taxon>Rhabditina</taxon>
        <taxon>Rhabditomorpha</taxon>
        <taxon>Rhabditoidea</taxon>
        <taxon>Rhabditidae</taxon>
        <taxon>Peloderinae</taxon>
        <taxon>Caenorhabditis</taxon>
    </lineage>
</organism>
<keyword id="KW-0027">Amidation</keyword>
<keyword id="KW-0044">Antibiotic</keyword>
<keyword id="KW-0929">Antimicrobial</keyword>
<keyword id="KW-0165">Cleavage on pair of basic residues</keyword>
<keyword id="KW-0295">Fungicide</keyword>
<keyword id="KW-0527">Neuropeptide</keyword>
<keyword id="KW-1185">Reference proteome</keyword>
<keyword id="KW-0677">Repeat</keyword>
<keyword id="KW-0964">Secreted</keyword>
<keyword id="KW-0732">Signal</keyword>
<name>NLP31_CAEEL</name>
<proteinExistence type="evidence at transcript level"/>
<feature type="signal peptide" evidence="1">
    <location>
        <begin position="1"/>
        <end position="22"/>
    </location>
</feature>
<feature type="peptide" id="PRO_0000041505" description="QWGYGGY-amide" evidence="1">
    <location>
        <begin position="23"/>
        <end position="29"/>
    </location>
</feature>
<feature type="peptide" id="PRO_0000041506" description="GYGGYGGY-amide" evidence="1">
    <location>
        <begin position="32"/>
        <end position="39"/>
    </location>
</feature>
<feature type="peptide" id="PRO_0000041507" description="GYGGYGGY-amide" evidence="1">
    <location>
        <begin position="42"/>
        <end position="49"/>
    </location>
</feature>
<feature type="peptide" id="PRO_0000041508" description="GYGGY-amide" evidence="1">
    <location>
        <begin position="52"/>
        <end position="56"/>
    </location>
</feature>
<feature type="peptide" id="PRO_0000041509" description="GMYGGY-amide" evidence="1">
    <location>
        <begin position="59"/>
        <end position="64"/>
    </location>
</feature>
<feature type="peptide" id="PRO_0000041510" description="PYGGYGW-amide" evidence="1">
    <location>
        <begin position="67"/>
        <end position="73"/>
    </location>
</feature>
<feature type="modified residue" description="Tyrosine amide" evidence="1">
    <location>
        <position position="29"/>
    </location>
</feature>
<feature type="modified residue" description="Tyrosine amide" evidence="1">
    <location>
        <position position="39"/>
    </location>
</feature>
<feature type="modified residue" description="Tyrosine amide" evidence="1">
    <location>
        <position position="49"/>
    </location>
</feature>
<feature type="modified residue" description="Tyrosine amide" evidence="1">
    <location>
        <position position="56"/>
    </location>
</feature>
<feature type="modified residue" description="Tyrosine amide" evidence="1">
    <location>
        <position position="64"/>
    </location>
</feature>
<feature type="modified residue" description="Tryptophan amide" evidence="1">
    <location>
        <position position="73"/>
    </location>
</feature>
<gene>
    <name type="primary">nlp-31</name>
    <name type="ORF">B0213.6</name>
</gene>
<protein>
    <recommendedName>
        <fullName>Neuropeptide-like protein 31</fullName>
    </recommendedName>
    <component>
        <recommendedName>
            <fullName>QWGYGGY-amide</fullName>
        </recommendedName>
    </component>
    <component>
        <recommendedName>
            <fullName>GYGGYGGY-amide</fullName>
        </recommendedName>
    </component>
    <component>
        <recommendedName>
            <fullName>GYGGY-amide</fullName>
        </recommendedName>
    </component>
    <component>
        <recommendedName>
            <fullName>GMYGGY-amide</fullName>
        </recommendedName>
    </component>
    <component>
        <recommendedName>
            <fullName>PYGGYGW-amide</fullName>
        </recommendedName>
    </component>
</protein>
<reference key="1">
    <citation type="journal article" date="1998" name="Science">
        <title>Genome sequence of the nematode C. elegans: a platform for investigating biology.</title>
        <authorList>
            <consortium name="The C. elegans sequencing consortium"/>
        </authorList>
    </citation>
    <scope>NUCLEOTIDE SEQUENCE [LARGE SCALE GENOMIC DNA]</scope>
    <source>
        <strain>Bristol N2</strain>
    </source>
</reference>
<reference key="2">
    <citation type="journal article" date="2001" name="Proc. Natl. Acad. Sci. U.S.A.">
        <title>Identification of neuropeptide-like protein gene families in Caenorhabditis elegans and other species.</title>
        <authorList>
            <person name="Nathoo A.N."/>
            <person name="Moeller R.A."/>
            <person name="Westlund B.A."/>
            <person name="Hart A.C."/>
        </authorList>
    </citation>
    <scope>IDENTIFICATION</scope>
    <scope>TISSUE SPECIFICITY</scope>
</reference>
<reference key="3">
    <citation type="journal article" date="2004" name="Nat. Immunol.">
        <title>TLR-independent control of innate immunity in Caenorhabditis elegans by the TIR domain adaptor protein TIR-1, an ortholog of human SARM.</title>
        <authorList>
            <person name="Couillault C."/>
            <person name="Pujol N."/>
            <person name="Reboul J."/>
            <person name="Sabatier L."/>
            <person name="Guichou J.-F."/>
            <person name="Kohara Y."/>
            <person name="Ewbank J.J."/>
        </authorList>
    </citation>
    <scope>SYNTHESIS</scope>
    <scope>FUNCTION</scope>
    <scope>TISSUE SPECIFICITY</scope>
    <scope>INDUCTION</scope>
</reference>
<evidence type="ECO:0000255" key="1"/>
<evidence type="ECO:0000269" key="2">
    <source>
    </source>
</evidence>
<evidence type="ECO:0000269" key="3">
    <source>
    </source>
</evidence>
<evidence type="ECO:0000305" key="4"/>
<dbReference type="EMBL" id="FO080121">
    <property type="protein sequence ID" value="CCD61356.1"/>
    <property type="molecule type" value="Genomic_DNA"/>
</dbReference>
<dbReference type="PIR" id="A89016">
    <property type="entry name" value="A89016"/>
</dbReference>
<dbReference type="RefSeq" id="NP_504107.1">
    <property type="nucleotide sequence ID" value="NM_071706.6"/>
</dbReference>
<dbReference type="BioGRID" id="43858">
    <property type="interactions" value="1"/>
</dbReference>
<dbReference type="STRING" id="6239.B0213.6.1"/>
<dbReference type="PaxDb" id="6239-B0213.6"/>
<dbReference type="PeptideAtlas" id="O44662"/>
<dbReference type="EnsemblMetazoa" id="B0213.6.1">
    <property type="protein sequence ID" value="B0213.6.1"/>
    <property type="gene ID" value="WBGene00003769"/>
</dbReference>
<dbReference type="GeneID" id="178804"/>
<dbReference type="KEGG" id="cel:CELE_B0213.6"/>
<dbReference type="UCSC" id="B0213.6">
    <property type="organism name" value="c. elegans"/>
</dbReference>
<dbReference type="AGR" id="WB:WBGene00003769"/>
<dbReference type="CTD" id="178804"/>
<dbReference type="WormBase" id="B0213.6">
    <property type="protein sequence ID" value="CE16777"/>
    <property type="gene ID" value="WBGene00003769"/>
    <property type="gene designation" value="nlp-31"/>
</dbReference>
<dbReference type="eggNOG" id="ENOG502TJS1">
    <property type="taxonomic scope" value="Eukaryota"/>
</dbReference>
<dbReference type="HOGENOM" id="CLU_193227_0_0_1"/>
<dbReference type="InParanoid" id="O44662"/>
<dbReference type="OMA" id="FMAANAQ"/>
<dbReference type="PRO" id="PR:O44662"/>
<dbReference type="Proteomes" id="UP000001940">
    <property type="component" value="Chromosome V"/>
</dbReference>
<dbReference type="Bgee" id="WBGene00003769">
    <property type="expression patterns" value="Expressed in larva and 4 other cell types or tissues"/>
</dbReference>
<dbReference type="GO" id="GO:0005576">
    <property type="term" value="C:extracellular region"/>
    <property type="evidence" value="ECO:0007669"/>
    <property type="project" value="UniProtKB-SubCell"/>
</dbReference>
<dbReference type="GO" id="GO:0003690">
    <property type="term" value="F:double-stranded DNA binding"/>
    <property type="evidence" value="ECO:0000314"/>
    <property type="project" value="WormBase"/>
</dbReference>
<dbReference type="GO" id="GO:0042742">
    <property type="term" value="P:defense response to bacterium"/>
    <property type="evidence" value="ECO:0000314"/>
    <property type="project" value="WormBase"/>
</dbReference>
<dbReference type="GO" id="GO:0050832">
    <property type="term" value="P:defense response to fungus"/>
    <property type="evidence" value="ECO:0000314"/>
    <property type="project" value="WormBase"/>
</dbReference>
<dbReference type="GO" id="GO:0050829">
    <property type="term" value="P:defense response to Gram-negative bacterium"/>
    <property type="evidence" value="ECO:0000315"/>
    <property type="project" value="WormBase"/>
</dbReference>
<dbReference type="GO" id="GO:0031640">
    <property type="term" value="P:killing of cells of another organism"/>
    <property type="evidence" value="ECO:0000314"/>
    <property type="project" value="WormBase"/>
</dbReference>
<dbReference type="GO" id="GO:0007218">
    <property type="term" value="P:neuropeptide signaling pathway"/>
    <property type="evidence" value="ECO:0007669"/>
    <property type="project" value="UniProtKB-KW"/>
</dbReference>
<accession>O44662</accession>
<sequence length="75" mass="7788">MISTSSILVLVVLLACFMAANAQWGYGGYGRGYGGYGGYGRGYGGYGGYGRGYGGYGRGMYGGYGRPYGGYGWGK</sequence>
<comment type="function">
    <text evidence="3">Antimicrobial peptides that have antifungal activity against D.coniospora. Has weak antibacterial activity against Gram-positive bacteria M.luteus and Gram-negative E.coli.</text>
</comment>
<comment type="subcellular location">
    <subcellularLocation>
        <location evidence="4">Secreted</location>
    </subcellularLocation>
</comment>
<comment type="tissue specificity">
    <text evidence="2 3">Expressed in hypoderm.</text>
</comment>
<comment type="developmental stage">
    <text>Expressed in precomma stasge embryos.</text>
</comment>
<comment type="induction">
    <text evidence="3">Strongly up-regulated upon D.coniospora infection.</text>
</comment>
<comment type="similarity">
    <text evidence="4">Belongs to the YARP (YGGW-amide related peptide) family.</text>
</comment>